<accession>Q9CAV0</accession>
<feature type="chain" id="PRO_0000250180" description="Small ribosomal subunit protein eS1z">
    <location>
        <begin position="1"/>
        <end position="262"/>
    </location>
</feature>
<feature type="region of interest" description="Disordered" evidence="2">
    <location>
        <begin position="1"/>
        <end position="21"/>
    </location>
</feature>
<feature type="compositionally biased region" description="Basic residues" evidence="2">
    <location>
        <begin position="1"/>
        <end position="18"/>
    </location>
</feature>
<reference key="1">
    <citation type="journal article" date="2000" name="Nature">
        <title>Sequence and analysis of chromosome 3 of the plant Arabidopsis thaliana.</title>
        <authorList>
            <person name="Salanoubat M."/>
            <person name="Lemcke K."/>
            <person name="Rieger M."/>
            <person name="Ansorge W."/>
            <person name="Unseld M."/>
            <person name="Fartmann B."/>
            <person name="Valle G."/>
            <person name="Bloecker H."/>
            <person name="Perez-Alonso M."/>
            <person name="Obermaier B."/>
            <person name="Delseny M."/>
            <person name="Boutry M."/>
            <person name="Grivell L.A."/>
            <person name="Mache R."/>
            <person name="Puigdomenech P."/>
            <person name="De Simone V."/>
            <person name="Choisne N."/>
            <person name="Artiguenave F."/>
            <person name="Robert C."/>
            <person name="Brottier P."/>
            <person name="Wincker P."/>
            <person name="Cattolico L."/>
            <person name="Weissenbach J."/>
            <person name="Saurin W."/>
            <person name="Quetier F."/>
            <person name="Schaefer M."/>
            <person name="Mueller-Auer S."/>
            <person name="Gabel C."/>
            <person name="Fuchs M."/>
            <person name="Benes V."/>
            <person name="Wurmbach E."/>
            <person name="Drzonek H."/>
            <person name="Erfle H."/>
            <person name="Jordan N."/>
            <person name="Bangert S."/>
            <person name="Wiedelmann R."/>
            <person name="Kranz H."/>
            <person name="Voss H."/>
            <person name="Holland R."/>
            <person name="Brandt P."/>
            <person name="Nyakatura G."/>
            <person name="Vezzi A."/>
            <person name="D'Angelo M."/>
            <person name="Pallavicini A."/>
            <person name="Toppo S."/>
            <person name="Simionati B."/>
            <person name="Conrad A."/>
            <person name="Hornischer K."/>
            <person name="Kauer G."/>
            <person name="Loehnert T.-H."/>
            <person name="Nordsiek G."/>
            <person name="Reichelt J."/>
            <person name="Scharfe M."/>
            <person name="Schoen O."/>
            <person name="Bargues M."/>
            <person name="Terol J."/>
            <person name="Climent J."/>
            <person name="Navarro P."/>
            <person name="Collado C."/>
            <person name="Perez-Perez A."/>
            <person name="Ottenwaelder B."/>
            <person name="Duchemin D."/>
            <person name="Cooke R."/>
            <person name="Laudie M."/>
            <person name="Berger-Llauro C."/>
            <person name="Purnelle B."/>
            <person name="Masuy D."/>
            <person name="de Haan M."/>
            <person name="Maarse A.C."/>
            <person name="Alcaraz J.-P."/>
            <person name="Cottet A."/>
            <person name="Casacuberta E."/>
            <person name="Monfort A."/>
            <person name="Argiriou A."/>
            <person name="Flores M."/>
            <person name="Liguori R."/>
            <person name="Vitale D."/>
            <person name="Mannhaupt G."/>
            <person name="Haase D."/>
            <person name="Schoof H."/>
            <person name="Rudd S."/>
            <person name="Zaccaria P."/>
            <person name="Mewes H.-W."/>
            <person name="Mayer K.F.X."/>
            <person name="Kaul S."/>
            <person name="Town C.D."/>
            <person name="Koo H.L."/>
            <person name="Tallon L.J."/>
            <person name="Jenkins J."/>
            <person name="Rooney T."/>
            <person name="Rizzo M."/>
            <person name="Walts A."/>
            <person name="Utterback T."/>
            <person name="Fujii C.Y."/>
            <person name="Shea T.P."/>
            <person name="Creasy T.H."/>
            <person name="Haas B."/>
            <person name="Maiti R."/>
            <person name="Wu D."/>
            <person name="Peterson J."/>
            <person name="Van Aken S."/>
            <person name="Pai G."/>
            <person name="Militscher J."/>
            <person name="Sellers P."/>
            <person name="Gill J.E."/>
            <person name="Feldblyum T.V."/>
            <person name="Preuss D."/>
            <person name="Lin X."/>
            <person name="Nierman W.C."/>
            <person name="Salzberg S.L."/>
            <person name="White O."/>
            <person name="Venter J.C."/>
            <person name="Fraser C.M."/>
            <person name="Kaneko T."/>
            <person name="Nakamura Y."/>
            <person name="Sato S."/>
            <person name="Kato T."/>
            <person name="Asamizu E."/>
            <person name="Sasamoto S."/>
            <person name="Kimura T."/>
            <person name="Idesawa K."/>
            <person name="Kawashima K."/>
            <person name="Kishida Y."/>
            <person name="Kiyokawa C."/>
            <person name="Kohara M."/>
            <person name="Matsumoto M."/>
            <person name="Matsuno A."/>
            <person name="Muraki A."/>
            <person name="Nakayama S."/>
            <person name="Nakazaki N."/>
            <person name="Shinpo S."/>
            <person name="Takeuchi C."/>
            <person name="Wada T."/>
            <person name="Watanabe A."/>
            <person name="Yamada M."/>
            <person name="Yasuda M."/>
            <person name="Tabata S."/>
        </authorList>
    </citation>
    <scope>NUCLEOTIDE SEQUENCE [LARGE SCALE GENOMIC DNA]</scope>
    <source>
        <strain>cv. Columbia</strain>
    </source>
</reference>
<reference key="2">
    <citation type="journal article" date="2017" name="Plant J.">
        <title>Araport11: a complete reannotation of the Arabidopsis thaliana reference genome.</title>
        <authorList>
            <person name="Cheng C.Y."/>
            <person name="Krishnakumar V."/>
            <person name="Chan A.P."/>
            <person name="Thibaud-Nissen F."/>
            <person name="Schobel S."/>
            <person name="Town C.D."/>
        </authorList>
    </citation>
    <scope>GENOME REANNOTATION</scope>
    <source>
        <strain>cv. Columbia</strain>
    </source>
</reference>
<reference key="3">
    <citation type="journal article" date="2003" name="Science">
        <title>Empirical analysis of transcriptional activity in the Arabidopsis genome.</title>
        <authorList>
            <person name="Yamada K."/>
            <person name="Lim J."/>
            <person name="Dale J.M."/>
            <person name="Chen H."/>
            <person name="Shinn P."/>
            <person name="Palm C.J."/>
            <person name="Southwick A.M."/>
            <person name="Wu H.C."/>
            <person name="Kim C.J."/>
            <person name="Nguyen M."/>
            <person name="Pham P.K."/>
            <person name="Cheuk R.F."/>
            <person name="Karlin-Newmann G."/>
            <person name="Liu S.X."/>
            <person name="Lam B."/>
            <person name="Sakano H."/>
            <person name="Wu T."/>
            <person name="Yu G."/>
            <person name="Miranda M."/>
            <person name="Quach H.L."/>
            <person name="Tripp M."/>
            <person name="Chang C.H."/>
            <person name="Lee J.M."/>
            <person name="Toriumi M.J."/>
            <person name="Chan M.M."/>
            <person name="Tang C.C."/>
            <person name="Onodera C.S."/>
            <person name="Deng J.M."/>
            <person name="Akiyama K."/>
            <person name="Ansari Y."/>
            <person name="Arakawa T."/>
            <person name="Banh J."/>
            <person name="Banno F."/>
            <person name="Bowser L."/>
            <person name="Brooks S.Y."/>
            <person name="Carninci P."/>
            <person name="Chao Q."/>
            <person name="Choy N."/>
            <person name="Enju A."/>
            <person name="Goldsmith A.D."/>
            <person name="Gurjal M."/>
            <person name="Hansen N.F."/>
            <person name="Hayashizaki Y."/>
            <person name="Johnson-Hopson C."/>
            <person name="Hsuan V.W."/>
            <person name="Iida K."/>
            <person name="Karnes M."/>
            <person name="Khan S."/>
            <person name="Koesema E."/>
            <person name="Ishida J."/>
            <person name="Jiang P.X."/>
            <person name="Jones T."/>
            <person name="Kawai J."/>
            <person name="Kamiya A."/>
            <person name="Meyers C."/>
            <person name="Nakajima M."/>
            <person name="Narusaka M."/>
            <person name="Seki M."/>
            <person name="Sakurai T."/>
            <person name="Satou M."/>
            <person name="Tamse R."/>
            <person name="Vaysberg M."/>
            <person name="Wallender E.K."/>
            <person name="Wong C."/>
            <person name="Yamamura Y."/>
            <person name="Yuan S."/>
            <person name="Shinozaki K."/>
            <person name="Davis R.W."/>
            <person name="Theologis A."/>
            <person name="Ecker J.R."/>
        </authorList>
    </citation>
    <scope>NUCLEOTIDE SEQUENCE [LARGE SCALE MRNA]</scope>
    <source>
        <strain>cv. Columbia</strain>
    </source>
</reference>
<reference key="4">
    <citation type="submission" date="2002-03" db="EMBL/GenBank/DDBJ databases">
        <title>Full-length cDNA from Arabidopsis thaliana.</title>
        <authorList>
            <person name="Brover V.V."/>
            <person name="Troukhan M.E."/>
            <person name="Alexandrov N.A."/>
            <person name="Lu Y.-P."/>
            <person name="Flavell R.B."/>
            <person name="Feldmann K.A."/>
        </authorList>
    </citation>
    <scope>NUCLEOTIDE SEQUENCE [LARGE SCALE MRNA]</scope>
</reference>
<reference key="5">
    <citation type="journal article" date="2001" name="Plant Physiol.">
        <title>The organization of cytoplasmic ribosomal protein genes in the Arabidopsis genome.</title>
        <authorList>
            <person name="Barakat A."/>
            <person name="Szick-Miranda K."/>
            <person name="Chang I.-F."/>
            <person name="Guyot R."/>
            <person name="Blanc G."/>
            <person name="Cooke R."/>
            <person name="Delseny M."/>
            <person name="Bailey-Serres J."/>
        </authorList>
    </citation>
    <scope>GENE FAMILY ORGANIZATION</scope>
    <scope>NOMENCLATURE</scope>
</reference>
<reference key="6">
    <citation type="journal article" date="2007" name="Mol. Cell. Proteomics">
        <title>Multidimensional protein identification technology (MudPIT) analysis of ubiquitinated proteins in plants.</title>
        <authorList>
            <person name="Maor R."/>
            <person name="Jones A."/>
            <person name="Nuehse T.S."/>
            <person name="Studholme D.J."/>
            <person name="Peck S.C."/>
            <person name="Shirasu K."/>
        </authorList>
    </citation>
    <scope>IDENTIFICATION BY MASS SPECTROMETRY [LARGE SCALE ANALYSIS]</scope>
    <source>
        <strain>cv. Landsberg erecta</strain>
    </source>
</reference>
<reference key="7">
    <citation type="journal article" date="2009" name="Plant Physiol.">
        <title>Large-scale Arabidopsis phosphoproteome profiling reveals novel chloroplast kinase substrates and phosphorylation networks.</title>
        <authorList>
            <person name="Reiland S."/>
            <person name="Messerli G."/>
            <person name="Baerenfaller K."/>
            <person name="Gerrits B."/>
            <person name="Endler A."/>
            <person name="Grossmann J."/>
            <person name="Gruissem W."/>
            <person name="Baginsky S."/>
        </authorList>
    </citation>
    <scope>IDENTIFICATION BY MASS SPECTROMETRY [LARGE SCALE ANALYSIS]</scope>
</reference>
<reference key="8">
    <citation type="journal article" date="2023" name="Plant Cell">
        <title>An updated nomenclature for plant ribosomal protein genes.</title>
        <authorList>
            <person name="Scarpin M.R."/>
            <person name="Busche M."/>
            <person name="Martinez R.E."/>
            <person name="Harper L.C."/>
            <person name="Reiser L."/>
            <person name="Szakonyi D."/>
            <person name="Merchante C."/>
            <person name="Lan T."/>
            <person name="Xiong W."/>
            <person name="Mo B."/>
            <person name="Tang G."/>
            <person name="Chen X."/>
            <person name="Bailey-Serres J."/>
            <person name="Browning K.S."/>
            <person name="Brunkard J.O."/>
        </authorList>
    </citation>
    <scope>NOMENCLATURE</scope>
</reference>
<name>RS3A1_ARATH</name>
<gene>
    <name evidence="1" type="primary">RPS3AA</name>
    <name type="ordered locus">At3g04840</name>
    <name type="ORF">T9J14.21</name>
</gene>
<sequence>MAVGKNKRISKGRKGGKKKAVDPFSKKDWYDVKAPSIFTHRNVGKTLVSRTQGTKIASEGLKHRVFEVSLADLQGDEDNAYRKIRLRAEDVQGRNVLCQFWGMDFTTDKLRSLVKKWQTLIEAHVDVKTTDSYTLRLFCIAFTKRRANQVKRTCYAQSSQIRQIRRKMRDIMVREASSCDLKDLVAKFIPEAIGREIEKATQGIYPLQNVFIRKVKILKAPKFDLGKLMDVHGDYSAEDVGVKVDRPADEMAVEEPTEIIGA</sequence>
<dbReference type="EMBL" id="AC009465">
    <property type="protein sequence ID" value="AAG51414.1"/>
    <property type="molecule type" value="Genomic_DNA"/>
</dbReference>
<dbReference type="EMBL" id="CP002686">
    <property type="protein sequence ID" value="AEE74143.1"/>
    <property type="molecule type" value="Genomic_DNA"/>
</dbReference>
<dbReference type="EMBL" id="AY062796">
    <property type="protein sequence ID" value="AAL32874.1"/>
    <property type="molecule type" value="mRNA"/>
</dbReference>
<dbReference type="EMBL" id="AY081585">
    <property type="protein sequence ID" value="AAM10147.1"/>
    <property type="molecule type" value="mRNA"/>
</dbReference>
<dbReference type="EMBL" id="AY085787">
    <property type="protein sequence ID" value="AAM63004.1"/>
    <property type="molecule type" value="mRNA"/>
</dbReference>
<dbReference type="RefSeq" id="NP_187135.1">
    <property type="nucleotide sequence ID" value="NM_111356.5"/>
</dbReference>
<dbReference type="SMR" id="Q9CAV0"/>
<dbReference type="BioGRID" id="4979">
    <property type="interactions" value="161"/>
</dbReference>
<dbReference type="FunCoup" id="Q9CAV0">
    <property type="interactions" value="2743"/>
</dbReference>
<dbReference type="IntAct" id="Q9CAV0">
    <property type="interactions" value="3"/>
</dbReference>
<dbReference type="STRING" id="3702.Q9CAV0"/>
<dbReference type="iPTMnet" id="Q9CAV0"/>
<dbReference type="PaxDb" id="3702-AT3G04840.1"/>
<dbReference type="ProteomicsDB" id="228103"/>
<dbReference type="EnsemblPlants" id="AT3G04840.1">
    <property type="protein sequence ID" value="AT3G04840.1"/>
    <property type="gene ID" value="AT3G04840"/>
</dbReference>
<dbReference type="GeneID" id="819644"/>
<dbReference type="Gramene" id="AT3G04840.1">
    <property type="protein sequence ID" value="AT3G04840.1"/>
    <property type="gene ID" value="AT3G04840"/>
</dbReference>
<dbReference type="KEGG" id="ath:AT3G04840"/>
<dbReference type="Araport" id="AT3G04840"/>
<dbReference type="TAIR" id="AT3G04840"/>
<dbReference type="eggNOG" id="KOG1628">
    <property type="taxonomic scope" value="Eukaryota"/>
</dbReference>
<dbReference type="HOGENOM" id="CLU_062507_0_0_1"/>
<dbReference type="InParanoid" id="Q9CAV0"/>
<dbReference type="OMA" id="TRFKGHE"/>
<dbReference type="OrthoDB" id="9834376at2759"/>
<dbReference type="PhylomeDB" id="Q9CAV0"/>
<dbReference type="CD-CODE" id="4299E36E">
    <property type="entry name" value="Nucleolus"/>
</dbReference>
<dbReference type="PRO" id="PR:Q9CAV0"/>
<dbReference type="Proteomes" id="UP000006548">
    <property type="component" value="Chromosome 3"/>
</dbReference>
<dbReference type="ExpressionAtlas" id="Q9CAV0">
    <property type="expression patterns" value="baseline and differential"/>
</dbReference>
<dbReference type="GO" id="GO:0005829">
    <property type="term" value="C:cytosol"/>
    <property type="evidence" value="ECO:0007005"/>
    <property type="project" value="TAIR"/>
</dbReference>
<dbReference type="GO" id="GO:0022626">
    <property type="term" value="C:cytosolic ribosome"/>
    <property type="evidence" value="ECO:0007005"/>
    <property type="project" value="TAIR"/>
</dbReference>
<dbReference type="GO" id="GO:0022627">
    <property type="term" value="C:cytosolic small ribosomal subunit"/>
    <property type="evidence" value="ECO:0007005"/>
    <property type="project" value="TAIR"/>
</dbReference>
<dbReference type="GO" id="GO:0009506">
    <property type="term" value="C:plasmodesma"/>
    <property type="evidence" value="ECO:0007005"/>
    <property type="project" value="TAIR"/>
</dbReference>
<dbReference type="GO" id="GO:0003729">
    <property type="term" value="F:mRNA binding"/>
    <property type="evidence" value="ECO:0000314"/>
    <property type="project" value="TAIR"/>
</dbReference>
<dbReference type="GO" id="GO:0003735">
    <property type="term" value="F:structural constituent of ribosome"/>
    <property type="evidence" value="ECO:0000314"/>
    <property type="project" value="CAFA"/>
</dbReference>
<dbReference type="GO" id="GO:0006412">
    <property type="term" value="P:translation"/>
    <property type="evidence" value="ECO:0007669"/>
    <property type="project" value="UniProtKB-UniRule"/>
</dbReference>
<dbReference type="HAMAP" id="MF_03122">
    <property type="entry name" value="Ribosomal_eS1_euk"/>
    <property type="match status" value="1"/>
</dbReference>
<dbReference type="InterPro" id="IPR001593">
    <property type="entry name" value="Ribosomal_eS1"/>
</dbReference>
<dbReference type="InterPro" id="IPR018281">
    <property type="entry name" value="Ribosomal_eS1_CS"/>
</dbReference>
<dbReference type="InterPro" id="IPR027500">
    <property type="entry name" value="Ribosomal_eS1_euk"/>
</dbReference>
<dbReference type="PANTHER" id="PTHR11830">
    <property type="entry name" value="40S RIBOSOMAL PROTEIN S3A"/>
    <property type="match status" value="1"/>
</dbReference>
<dbReference type="Pfam" id="PF01015">
    <property type="entry name" value="Ribosomal_S3Ae"/>
    <property type="match status" value="1"/>
</dbReference>
<dbReference type="SMART" id="SM01397">
    <property type="entry name" value="Ribosomal_S3Ae"/>
    <property type="match status" value="1"/>
</dbReference>
<dbReference type="PROSITE" id="PS01191">
    <property type="entry name" value="RIBOSOMAL_S3AE"/>
    <property type="match status" value="1"/>
</dbReference>
<keyword id="KW-0963">Cytoplasm</keyword>
<keyword id="KW-1185">Reference proteome</keyword>
<keyword id="KW-0687">Ribonucleoprotein</keyword>
<keyword id="KW-0689">Ribosomal protein</keyword>
<proteinExistence type="evidence at protein level"/>
<comment type="subunit">
    <text evidence="1">Component of the small ribosomal subunit. Mature ribosomes consist of a small (40S) and a large (60S) subunit. The 40S subunit contains about 33 different proteins and 1 molecule of RNA (18S). The 60S subunit contains about 49 different proteins and 3 molecules of RNA (25S, 5.8S and 5S).</text>
</comment>
<comment type="subcellular location">
    <subcellularLocation>
        <location evidence="1">Cytoplasm</location>
    </subcellularLocation>
</comment>
<comment type="similarity">
    <text evidence="1">Belongs to the eukaryotic ribosomal protein eS1 family.</text>
</comment>
<organism>
    <name type="scientific">Arabidopsis thaliana</name>
    <name type="common">Mouse-ear cress</name>
    <dbReference type="NCBI Taxonomy" id="3702"/>
    <lineage>
        <taxon>Eukaryota</taxon>
        <taxon>Viridiplantae</taxon>
        <taxon>Streptophyta</taxon>
        <taxon>Embryophyta</taxon>
        <taxon>Tracheophyta</taxon>
        <taxon>Spermatophyta</taxon>
        <taxon>Magnoliopsida</taxon>
        <taxon>eudicotyledons</taxon>
        <taxon>Gunneridae</taxon>
        <taxon>Pentapetalae</taxon>
        <taxon>rosids</taxon>
        <taxon>malvids</taxon>
        <taxon>Brassicales</taxon>
        <taxon>Brassicaceae</taxon>
        <taxon>Camelineae</taxon>
        <taxon>Arabidopsis</taxon>
    </lineage>
</organism>
<evidence type="ECO:0000255" key="1">
    <source>
        <dbReference type="HAMAP-Rule" id="MF_03122"/>
    </source>
</evidence>
<evidence type="ECO:0000256" key="2">
    <source>
        <dbReference type="SAM" id="MobiDB-lite"/>
    </source>
</evidence>
<evidence type="ECO:0000303" key="3">
    <source>
    </source>
</evidence>
<protein>
    <recommendedName>
        <fullName evidence="3">Small ribosomal subunit protein eS1z</fullName>
    </recommendedName>
    <alternativeName>
        <fullName evidence="1">40S ribosomal protein S3a-1</fullName>
    </alternativeName>
</protein>